<feature type="chain" id="PRO_0000203914" description="Tagatose-6-phosphate kinase">
    <location>
        <begin position="1"/>
        <end position="313"/>
    </location>
</feature>
<feature type="strand" evidence="2">
    <location>
        <begin position="2"/>
        <end position="8"/>
    </location>
</feature>
<feature type="strand" evidence="2">
    <location>
        <begin position="10"/>
        <end position="16"/>
    </location>
</feature>
<feature type="strand" evidence="2">
    <location>
        <begin position="24"/>
        <end position="29"/>
    </location>
</feature>
<feature type="strand" evidence="2">
    <location>
        <begin position="31"/>
        <end position="37"/>
    </location>
</feature>
<feature type="helix" evidence="2">
    <location>
        <begin position="38"/>
        <end position="49"/>
    </location>
</feature>
<feature type="strand" evidence="2">
    <location>
        <begin position="53"/>
        <end position="60"/>
    </location>
</feature>
<feature type="helix" evidence="2">
    <location>
        <begin position="61"/>
        <end position="73"/>
    </location>
</feature>
<feature type="strand" evidence="2">
    <location>
        <begin position="81"/>
        <end position="85"/>
    </location>
</feature>
<feature type="strand" evidence="2">
    <location>
        <begin position="88"/>
        <end position="95"/>
    </location>
</feature>
<feature type="strand" evidence="2">
    <location>
        <begin position="98"/>
        <end position="104"/>
    </location>
</feature>
<feature type="helix" evidence="2">
    <location>
        <begin position="111"/>
        <end position="125"/>
    </location>
</feature>
<feature type="strand" evidence="2">
    <location>
        <begin position="129"/>
        <end position="135"/>
    </location>
</feature>
<feature type="helix" evidence="2">
    <location>
        <begin position="145"/>
        <end position="155"/>
    </location>
</feature>
<feature type="strand" evidence="2">
    <location>
        <begin position="159"/>
        <end position="163"/>
    </location>
</feature>
<feature type="helix" evidence="2">
    <location>
        <begin position="167"/>
        <end position="174"/>
    </location>
</feature>
<feature type="strand" evidence="2">
    <location>
        <begin position="180"/>
        <end position="182"/>
    </location>
</feature>
<feature type="helix" evidence="2">
    <location>
        <begin position="186"/>
        <end position="193"/>
    </location>
</feature>
<feature type="helix" evidence="2">
    <location>
        <begin position="202"/>
        <end position="209"/>
    </location>
</feature>
<feature type="helix" evidence="2">
    <location>
        <begin position="212"/>
        <end position="214"/>
    </location>
</feature>
<feature type="strand" evidence="2">
    <location>
        <begin position="218"/>
        <end position="223"/>
    </location>
</feature>
<feature type="helix" evidence="2">
    <location>
        <begin position="225"/>
        <end position="227"/>
    </location>
</feature>
<feature type="strand" evidence="2">
    <location>
        <begin position="229"/>
        <end position="233"/>
    </location>
</feature>
<feature type="strand" evidence="2">
    <location>
        <begin position="236"/>
        <end position="241"/>
    </location>
</feature>
<feature type="helix" evidence="2">
    <location>
        <begin position="253"/>
        <end position="266"/>
    </location>
</feature>
<feature type="helix" evidence="2">
    <location>
        <begin position="271"/>
        <end position="287"/>
    </location>
</feature>
<feature type="strand" evidence="2">
    <location>
        <begin position="288"/>
        <end position="292"/>
    </location>
</feature>
<feature type="helix" evidence="2">
    <location>
        <begin position="296"/>
        <end position="303"/>
    </location>
</feature>
<feature type="strand" evidence="2">
    <location>
        <begin position="307"/>
        <end position="310"/>
    </location>
</feature>
<keyword id="KW-0002">3D-structure</keyword>
<keyword id="KW-0067">ATP-binding</keyword>
<keyword id="KW-0418">Kinase</keyword>
<keyword id="KW-0423">Lactose metabolism</keyword>
<keyword id="KW-0547">Nucleotide-binding</keyword>
<keyword id="KW-1185">Reference proteome</keyword>
<keyword id="KW-0808">Transferase</keyword>
<dbReference type="EC" id="2.7.1.144" evidence="1"/>
<dbReference type="EMBL" id="AE016830">
    <property type="protein sequence ID" value="AAO81574.1"/>
    <property type="molecule type" value="Genomic_DNA"/>
</dbReference>
<dbReference type="RefSeq" id="NP_815504.1">
    <property type="nucleotide sequence ID" value="NC_004668.1"/>
</dbReference>
<dbReference type="RefSeq" id="WP_010706669.1">
    <property type="nucleotide sequence ID" value="NZ_KE136528.1"/>
</dbReference>
<dbReference type="PDB" id="2AWD">
    <property type="method" value="X-ray"/>
    <property type="resolution" value="2.00 A"/>
    <property type="chains" value="A/B=2-313"/>
</dbReference>
<dbReference type="PDB" id="2F02">
    <property type="method" value="X-ray"/>
    <property type="resolution" value="1.90 A"/>
    <property type="chains" value="A/B=2-313"/>
</dbReference>
<dbReference type="PDBsum" id="2AWD"/>
<dbReference type="PDBsum" id="2F02"/>
<dbReference type="SMR" id="Q833W9"/>
<dbReference type="STRING" id="226185.EF_1806"/>
<dbReference type="DNASU" id="1200692"/>
<dbReference type="EnsemblBacteria" id="AAO81574">
    <property type="protein sequence ID" value="AAO81574"/>
    <property type="gene ID" value="EF_1806"/>
</dbReference>
<dbReference type="KEGG" id="efa:EF1806"/>
<dbReference type="PATRIC" id="fig|226185.45.peg.1712"/>
<dbReference type="eggNOG" id="COG1105">
    <property type="taxonomic scope" value="Bacteria"/>
</dbReference>
<dbReference type="HOGENOM" id="CLU_050013_5_0_9"/>
<dbReference type="UniPathway" id="UPA00704">
    <property type="reaction ID" value="UER00715"/>
</dbReference>
<dbReference type="EvolutionaryTrace" id="Q833W9"/>
<dbReference type="Proteomes" id="UP000001415">
    <property type="component" value="Chromosome"/>
</dbReference>
<dbReference type="GO" id="GO:0005829">
    <property type="term" value="C:cytosol"/>
    <property type="evidence" value="ECO:0007669"/>
    <property type="project" value="TreeGrafter"/>
</dbReference>
<dbReference type="GO" id="GO:0005524">
    <property type="term" value="F:ATP binding"/>
    <property type="evidence" value="ECO:0007669"/>
    <property type="project" value="UniProtKB-KW"/>
</dbReference>
<dbReference type="GO" id="GO:0008443">
    <property type="term" value="F:phosphofructokinase activity"/>
    <property type="evidence" value="ECO:0007669"/>
    <property type="project" value="TreeGrafter"/>
</dbReference>
<dbReference type="GO" id="GO:0009024">
    <property type="term" value="F:tagatose-6-phosphate kinase activity"/>
    <property type="evidence" value="ECO:0007669"/>
    <property type="project" value="UniProtKB-UniRule"/>
</dbReference>
<dbReference type="GO" id="GO:2001059">
    <property type="term" value="P:D-tagatose 6-phosphate catabolic process"/>
    <property type="evidence" value="ECO:0007669"/>
    <property type="project" value="UniProtKB-UniRule"/>
</dbReference>
<dbReference type="GO" id="GO:0019512">
    <property type="term" value="P:lactose catabolic process via tagatose-6-phosphate"/>
    <property type="evidence" value="ECO:0007669"/>
    <property type="project" value="InterPro"/>
</dbReference>
<dbReference type="CDD" id="cd01164">
    <property type="entry name" value="FruK_PfkB_like"/>
    <property type="match status" value="1"/>
</dbReference>
<dbReference type="FunFam" id="3.40.1190.20:FF:000001">
    <property type="entry name" value="Phosphofructokinase"/>
    <property type="match status" value="1"/>
</dbReference>
<dbReference type="Gene3D" id="3.40.1190.20">
    <property type="match status" value="1"/>
</dbReference>
<dbReference type="HAMAP" id="MF_01557">
    <property type="entry name" value="LacC"/>
    <property type="match status" value="1"/>
</dbReference>
<dbReference type="InterPro" id="IPR002173">
    <property type="entry name" value="Carboh/pur_kinase_PfkB_CS"/>
</dbReference>
<dbReference type="InterPro" id="IPR005926">
    <property type="entry name" value="LacC"/>
</dbReference>
<dbReference type="InterPro" id="IPR011611">
    <property type="entry name" value="PfkB_dom"/>
</dbReference>
<dbReference type="InterPro" id="IPR029056">
    <property type="entry name" value="Ribokinase-like"/>
</dbReference>
<dbReference type="InterPro" id="IPR017583">
    <property type="entry name" value="Tagatose/fructose_Pkinase"/>
</dbReference>
<dbReference type="NCBIfam" id="TIGR03168">
    <property type="entry name" value="1-PFK"/>
    <property type="match status" value="1"/>
</dbReference>
<dbReference type="PANTHER" id="PTHR46566:SF5">
    <property type="entry name" value="1-PHOSPHOFRUCTOKINASE"/>
    <property type="match status" value="1"/>
</dbReference>
<dbReference type="PANTHER" id="PTHR46566">
    <property type="entry name" value="1-PHOSPHOFRUCTOKINASE-RELATED"/>
    <property type="match status" value="1"/>
</dbReference>
<dbReference type="Pfam" id="PF00294">
    <property type="entry name" value="PfkB"/>
    <property type="match status" value="1"/>
</dbReference>
<dbReference type="PIRSF" id="PIRSF000535">
    <property type="entry name" value="1PFK/6PFK/LacC"/>
    <property type="match status" value="1"/>
</dbReference>
<dbReference type="SUPFAM" id="SSF53613">
    <property type="entry name" value="Ribokinase-like"/>
    <property type="match status" value="1"/>
</dbReference>
<dbReference type="PROSITE" id="PS00583">
    <property type="entry name" value="PFKB_KINASES_1"/>
    <property type="match status" value="1"/>
</dbReference>
<dbReference type="PROSITE" id="PS00584">
    <property type="entry name" value="PFKB_KINASES_2"/>
    <property type="match status" value="1"/>
</dbReference>
<reference key="1">
    <citation type="journal article" date="2003" name="Science">
        <title>Role of mobile DNA in the evolution of vancomycin-resistant Enterococcus faecalis.</title>
        <authorList>
            <person name="Paulsen I.T."/>
            <person name="Banerjei L."/>
            <person name="Myers G.S.A."/>
            <person name="Nelson K.E."/>
            <person name="Seshadri R."/>
            <person name="Read T.D."/>
            <person name="Fouts D.E."/>
            <person name="Eisen J.A."/>
            <person name="Gill S.R."/>
            <person name="Heidelberg J.F."/>
            <person name="Tettelin H."/>
            <person name="Dodson R.J."/>
            <person name="Umayam L.A."/>
            <person name="Brinkac L.M."/>
            <person name="Beanan M.J."/>
            <person name="Daugherty S.C."/>
            <person name="DeBoy R.T."/>
            <person name="Durkin S.A."/>
            <person name="Kolonay J.F."/>
            <person name="Madupu R."/>
            <person name="Nelson W.C."/>
            <person name="Vamathevan J.J."/>
            <person name="Tran B."/>
            <person name="Upton J."/>
            <person name="Hansen T."/>
            <person name="Shetty J."/>
            <person name="Khouri H.M."/>
            <person name="Utterback T.R."/>
            <person name="Radune D."/>
            <person name="Ketchum K.A."/>
            <person name="Dougherty B.A."/>
            <person name="Fraser C.M."/>
        </authorList>
    </citation>
    <scope>NUCLEOTIDE SEQUENCE [LARGE SCALE GENOMIC DNA]</scope>
    <source>
        <strain>ATCC 700802 / V583</strain>
    </source>
</reference>
<comment type="catalytic activity">
    <reaction evidence="1">
        <text>D-tagatofuranose 6-phosphate + ATP = D-tagatofuranose 1,6-bisphosphate + ADP + H(+)</text>
        <dbReference type="Rhea" id="RHEA:12420"/>
        <dbReference type="ChEBI" id="CHEBI:15378"/>
        <dbReference type="ChEBI" id="CHEBI:30616"/>
        <dbReference type="ChEBI" id="CHEBI:58694"/>
        <dbReference type="ChEBI" id="CHEBI:58695"/>
        <dbReference type="ChEBI" id="CHEBI:456216"/>
        <dbReference type="EC" id="2.7.1.144"/>
    </reaction>
</comment>
<comment type="pathway">
    <text evidence="1">Carbohydrate metabolism; D-tagatose 6-phosphate degradation; D-glyceraldehyde 3-phosphate and glycerone phosphate from D-tagatose 6-phosphate: step 1/2.</text>
</comment>
<comment type="similarity">
    <text evidence="1">Belongs to the carbohydrate kinase PfkB family. LacC subfamily.</text>
</comment>
<protein>
    <recommendedName>
        <fullName evidence="1">Tagatose-6-phosphate kinase</fullName>
        <ecNumber evidence="1">2.7.1.144</ecNumber>
    </recommendedName>
    <alternativeName>
        <fullName evidence="1">Phosphotagatokinase</fullName>
    </alternativeName>
</protein>
<sequence>MIVTVTMNPSIDISYLLDHLKLDTVNRTSQVTKTPGGKGLNVTRVIHDLGGDVIATGVLGGFHGAFIANELKKANIPQAFTSIKEETRDSIAILHEGNQTEILEAGPTVSPEEISNFLENFDQLIKQAEIVTISGSLAKGLPSDFYQELVQKAHAQEVKVLLDTSGDSLRQVLQGPWKPYLIKPNLEELEGLLGQDFSENPLAAVQTALTKPMFAGIEWIVISLGKDGAIAKHHDQFYRVKIPTIQAKNPVGSGDATIAGLAYGLAKDAPAAELLKWGMAAGMANAQERMTGHVDVENVKKHLMNIQVVEIAK</sequence>
<evidence type="ECO:0000255" key="1">
    <source>
        <dbReference type="HAMAP-Rule" id="MF_01557"/>
    </source>
</evidence>
<evidence type="ECO:0007829" key="2">
    <source>
        <dbReference type="PDB" id="2F02"/>
    </source>
</evidence>
<proteinExistence type="evidence at protein level"/>
<organism>
    <name type="scientific">Enterococcus faecalis (strain ATCC 700802 / V583)</name>
    <dbReference type="NCBI Taxonomy" id="226185"/>
    <lineage>
        <taxon>Bacteria</taxon>
        <taxon>Bacillati</taxon>
        <taxon>Bacillota</taxon>
        <taxon>Bacilli</taxon>
        <taxon>Lactobacillales</taxon>
        <taxon>Enterococcaceae</taxon>
        <taxon>Enterococcus</taxon>
    </lineage>
</organism>
<gene>
    <name evidence="1" type="primary">lacC</name>
    <name type="ordered locus">EF_1806</name>
</gene>
<accession>Q833W9</accession>
<name>LACC_ENTFA</name>